<name>PSAG_PEA</name>
<comment type="function">
    <text>Not yet known.</text>
</comment>
<comment type="subcellular location">
    <subcellularLocation>
        <location evidence="1">Plastid</location>
        <location evidence="1">Chloroplast thylakoid membrane</location>
        <topology evidence="1">Multi-pass membrane protein</topology>
    </subcellularLocation>
</comment>
<comment type="similarity">
    <text evidence="1">Belongs to the PsaG/PsaK family.</text>
</comment>
<proteinExistence type="evidence at protein level"/>
<accession>P20120</accession>
<protein>
    <recommendedName>
        <fullName>Photosystem I reaction center subunit V</fullName>
    </recommendedName>
    <alternativeName>
        <fullName>PSI-G</fullName>
    </alternativeName>
    <alternativeName>
        <fullName>Photosystem I 9 kDa protein</fullName>
    </alternativeName>
</protein>
<sequence>ELNPSLVISLSTGLSLFLGRFVFFNFQRENVAKQGLPEQ</sequence>
<gene>
    <name type="primary">PSAG</name>
</gene>
<feature type="chain" id="PRO_0000206208" description="Photosystem I reaction center subunit V">
    <location>
        <begin position="1"/>
        <end position="39" status="greater than"/>
    </location>
</feature>
<feature type="non-terminal residue">
    <location>
        <position position="39"/>
    </location>
</feature>
<feature type="helix" evidence="2">
    <location>
        <begin position="5"/>
        <end position="20"/>
    </location>
</feature>
<feature type="helix" evidence="2">
    <location>
        <begin position="24"/>
        <end position="32"/>
    </location>
</feature>
<keyword id="KW-0002">3D-structure</keyword>
<keyword id="KW-0150">Chloroplast</keyword>
<keyword id="KW-0903">Direct protein sequencing</keyword>
<keyword id="KW-0472">Membrane</keyword>
<keyword id="KW-0602">Photosynthesis</keyword>
<keyword id="KW-0603">Photosystem I</keyword>
<keyword id="KW-0934">Plastid</keyword>
<keyword id="KW-0793">Thylakoid</keyword>
<keyword id="KW-0812">Transmembrane</keyword>
<organism>
    <name type="scientific">Pisum sativum</name>
    <name type="common">Garden pea</name>
    <name type="synonym">Lathyrus oleraceus</name>
    <dbReference type="NCBI Taxonomy" id="3888"/>
    <lineage>
        <taxon>Eukaryota</taxon>
        <taxon>Viridiplantae</taxon>
        <taxon>Streptophyta</taxon>
        <taxon>Embryophyta</taxon>
        <taxon>Tracheophyta</taxon>
        <taxon>Spermatophyta</taxon>
        <taxon>Magnoliopsida</taxon>
        <taxon>eudicotyledons</taxon>
        <taxon>Gunneridae</taxon>
        <taxon>Pentapetalae</taxon>
        <taxon>rosids</taxon>
        <taxon>fabids</taxon>
        <taxon>Fabales</taxon>
        <taxon>Fabaceae</taxon>
        <taxon>Papilionoideae</taxon>
        <taxon>50 kb inversion clade</taxon>
        <taxon>NPAAA clade</taxon>
        <taxon>Hologalegina</taxon>
        <taxon>IRL clade</taxon>
        <taxon>Fabeae</taxon>
        <taxon>Pisum</taxon>
    </lineage>
</organism>
<evidence type="ECO:0000305" key="1"/>
<evidence type="ECO:0007829" key="2">
    <source>
        <dbReference type="PDB" id="4RKU"/>
    </source>
</evidence>
<reference key="1">
    <citation type="journal article" date="1988" name="FEBS Lett.">
        <title>N-terminal amino acid sequence analysis of the subunits of pea photosystem I.</title>
        <authorList>
            <person name="Dunn P.P.J."/>
            <person name="Packman L.C."/>
            <person name="Pappin D."/>
            <person name="Gray J.C."/>
        </authorList>
    </citation>
    <scope>PROTEIN SEQUENCE</scope>
</reference>
<dbReference type="PIR" id="S00318">
    <property type="entry name" value="S00318"/>
</dbReference>
<dbReference type="PDB" id="3LW5">
    <property type="method" value="X-ray"/>
    <property type="resolution" value="3.30 A"/>
    <property type="chains" value="G=6-39"/>
</dbReference>
<dbReference type="PDB" id="4RKU">
    <property type="method" value="X-ray"/>
    <property type="resolution" value="3.00 A"/>
    <property type="chains" value="G=4-39"/>
</dbReference>
<dbReference type="PDBsum" id="3LW5"/>
<dbReference type="PDBsum" id="4RKU"/>
<dbReference type="SMR" id="P20120"/>
<dbReference type="DIP" id="DIP-60287N"/>
<dbReference type="IntAct" id="P20120">
    <property type="interactions" value="1"/>
</dbReference>
<dbReference type="GO" id="GO:0009535">
    <property type="term" value="C:chloroplast thylakoid membrane"/>
    <property type="evidence" value="ECO:0007669"/>
    <property type="project" value="UniProtKB-SubCell"/>
</dbReference>
<dbReference type="GO" id="GO:0009522">
    <property type="term" value="C:photosystem I"/>
    <property type="evidence" value="ECO:0007669"/>
    <property type="project" value="UniProtKB-KW"/>
</dbReference>
<dbReference type="GO" id="GO:0015979">
    <property type="term" value="P:photosynthesis"/>
    <property type="evidence" value="ECO:0007669"/>
    <property type="project" value="UniProtKB-KW"/>
</dbReference>
<dbReference type="Gene3D" id="1.10.286.40">
    <property type="entry name" value="Chlorophyll a-b binding protein like"/>
    <property type="match status" value="1"/>
</dbReference>
<dbReference type="InterPro" id="IPR000549">
    <property type="entry name" value="PSI_PsaG/PsaK"/>
</dbReference>
<dbReference type="InterPro" id="IPR023618">
    <property type="entry name" value="PSI_PsaG/PsaK_dom"/>
</dbReference>
<dbReference type="InterPro" id="IPR016370">
    <property type="entry name" value="PSI_PsaG/PsaK_pln"/>
</dbReference>
<dbReference type="PANTHER" id="PTHR34195:SF1">
    <property type="entry name" value="PHOTOSYSTEM I REACTION CENTER SUBUNIT V, CHLOROPLASTIC"/>
    <property type="match status" value="1"/>
</dbReference>
<dbReference type="PANTHER" id="PTHR34195">
    <property type="entry name" value="PHOTOSYSTEM I REACTION CENTER SUBUNIT V, CHLOROPLASTIC-RELATED"/>
    <property type="match status" value="1"/>
</dbReference>
<dbReference type="Pfam" id="PF01241">
    <property type="entry name" value="PSI_PSAK"/>
    <property type="match status" value="1"/>
</dbReference>